<protein>
    <recommendedName>
        <fullName evidence="1">3-deoxy-D-manno-octulosonic acid kinase</fullName>
        <shortName evidence="1">Kdo kinase</shortName>
        <ecNumber evidence="1">2.7.1.166</ecNumber>
    </recommendedName>
</protein>
<feature type="chain" id="PRO_0000263415" description="3-deoxy-D-manno-octulosonic acid kinase">
    <location>
        <begin position="1"/>
        <end position="249"/>
    </location>
</feature>
<feature type="active site" evidence="1">
    <location>
        <position position="175"/>
    </location>
</feature>
<evidence type="ECO:0000255" key="1">
    <source>
        <dbReference type="HAMAP-Rule" id="MF_00521"/>
    </source>
</evidence>
<organism>
    <name type="scientific">Xanthomonas campestris pv. campestris (strain 8004)</name>
    <dbReference type="NCBI Taxonomy" id="314565"/>
    <lineage>
        <taxon>Bacteria</taxon>
        <taxon>Pseudomonadati</taxon>
        <taxon>Pseudomonadota</taxon>
        <taxon>Gammaproteobacteria</taxon>
        <taxon>Lysobacterales</taxon>
        <taxon>Lysobacteraceae</taxon>
        <taxon>Xanthomonas</taxon>
    </lineage>
</organism>
<accession>Q4URM8</accession>
<name>KDKA_XANC8</name>
<gene>
    <name evidence="1" type="primary">kdkA</name>
    <name type="ordered locus">XC_3251</name>
</gene>
<sequence length="249" mass="28651">MVSFDATEALTPYREGRGYGAILFDRERLRQADAGLFSPQRWGDRARPVDEGGRGGAWFVDAPFGHSVLRQYRRGGMAARVSRDQYLWKGAGRTRSFAEFRLMRELLKRKLPVPRPLAACYLREGLGYRAALLMERLENVRSLADHAQVAGRGAPWEDTGRLIARFHRAGLDHADLNAHNILFDAGGHGWLIDFDRGVLRIPATRWRERNLARLHRSLLKLRGNRTREDVDKDYERLHRAYELAWGRGY</sequence>
<reference key="1">
    <citation type="journal article" date="2005" name="Genome Res.">
        <title>Comparative and functional genomic analyses of the pathogenicity of phytopathogen Xanthomonas campestris pv. campestris.</title>
        <authorList>
            <person name="Qian W."/>
            <person name="Jia Y."/>
            <person name="Ren S.-X."/>
            <person name="He Y.-Q."/>
            <person name="Feng J.-X."/>
            <person name="Lu L.-F."/>
            <person name="Sun Q."/>
            <person name="Ying G."/>
            <person name="Tang D.-J."/>
            <person name="Tang H."/>
            <person name="Wu W."/>
            <person name="Hao P."/>
            <person name="Wang L."/>
            <person name="Jiang B.-L."/>
            <person name="Zeng S."/>
            <person name="Gu W.-Y."/>
            <person name="Lu G."/>
            <person name="Rong L."/>
            <person name="Tian Y."/>
            <person name="Yao Z."/>
            <person name="Fu G."/>
            <person name="Chen B."/>
            <person name="Fang R."/>
            <person name="Qiang B."/>
            <person name="Chen Z."/>
            <person name="Zhao G.-P."/>
            <person name="Tang J.-L."/>
            <person name="He C."/>
        </authorList>
    </citation>
    <scope>NUCLEOTIDE SEQUENCE [LARGE SCALE GENOMIC DNA]</scope>
    <source>
        <strain>8004</strain>
    </source>
</reference>
<dbReference type="EC" id="2.7.1.166" evidence="1"/>
<dbReference type="EMBL" id="CP000050">
    <property type="protein sequence ID" value="AAY50295.1"/>
    <property type="molecule type" value="Genomic_DNA"/>
</dbReference>
<dbReference type="RefSeq" id="WP_011036197.1">
    <property type="nucleotide sequence ID" value="NZ_CP155948.1"/>
</dbReference>
<dbReference type="SMR" id="Q4URM8"/>
<dbReference type="DNASU" id="1001509"/>
<dbReference type="KEGG" id="xcb:XC_3251"/>
<dbReference type="HOGENOM" id="CLU_094226_0_0_6"/>
<dbReference type="UniPathway" id="UPA00958"/>
<dbReference type="Proteomes" id="UP000000420">
    <property type="component" value="Chromosome"/>
</dbReference>
<dbReference type="GO" id="GO:0005886">
    <property type="term" value="C:plasma membrane"/>
    <property type="evidence" value="ECO:0007669"/>
    <property type="project" value="UniProtKB-SubCell"/>
</dbReference>
<dbReference type="GO" id="GO:0005524">
    <property type="term" value="F:ATP binding"/>
    <property type="evidence" value="ECO:0007669"/>
    <property type="project" value="UniProtKB-UniRule"/>
</dbReference>
<dbReference type="GO" id="GO:0016301">
    <property type="term" value="F:kinase activity"/>
    <property type="evidence" value="ECO:0007669"/>
    <property type="project" value="UniProtKB-KW"/>
</dbReference>
<dbReference type="GO" id="GO:0016773">
    <property type="term" value="F:phosphotransferase activity, alcohol group as acceptor"/>
    <property type="evidence" value="ECO:0007669"/>
    <property type="project" value="UniProtKB-UniRule"/>
</dbReference>
<dbReference type="GO" id="GO:0009244">
    <property type="term" value="P:lipopolysaccharide core region biosynthetic process"/>
    <property type="evidence" value="ECO:0007669"/>
    <property type="project" value="UniProtKB-UniRule"/>
</dbReference>
<dbReference type="Gene3D" id="1.10.510.10">
    <property type="entry name" value="Transferase(Phosphotransferase) domain 1"/>
    <property type="match status" value="1"/>
</dbReference>
<dbReference type="HAMAP" id="MF_00521">
    <property type="entry name" value="KDO_kinase"/>
    <property type="match status" value="1"/>
</dbReference>
<dbReference type="InterPro" id="IPR022826">
    <property type="entry name" value="KDO_kinase"/>
</dbReference>
<dbReference type="InterPro" id="IPR011009">
    <property type="entry name" value="Kinase-like_dom_sf"/>
</dbReference>
<dbReference type="NCBIfam" id="NF002475">
    <property type="entry name" value="PRK01723.1"/>
    <property type="match status" value="1"/>
</dbReference>
<dbReference type="Pfam" id="PF06293">
    <property type="entry name" value="Kdo"/>
    <property type="match status" value="1"/>
</dbReference>
<dbReference type="SUPFAM" id="SSF56112">
    <property type="entry name" value="Protein kinase-like (PK-like)"/>
    <property type="match status" value="1"/>
</dbReference>
<keyword id="KW-0067">ATP-binding</keyword>
<keyword id="KW-0997">Cell inner membrane</keyword>
<keyword id="KW-1003">Cell membrane</keyword>
<keyword id="KW-0418">Kinase</keyword>
<keyword id="KW-0448">Lipopolysaccharide biosynthesis</keyword>
<keyword id="KW-0472">Membrane</keyword>
<keyword id="KW-0547">Nucleotide-binding</keyword>
<keyword id="KW-0808">Transferase</keyword>
<comment type="function">
    <text evidence="1">Catalyzes the ATP-dependent phosphorylation of the 3-deoxy-D-manno-octulosonic acid (Kdo) residue in Kdo-lipid IV(A) at the 4-OH position.</text>
</comment>
<comment type="catalytic activity">
    <reaction evidence="1">
        <text>an alpha-Kdo-(2-&gt;6)-lipid IVA + ATP = a 4-O-phospho-alpha-Kdo-(2-&gt;6)-lipid IVA + ADP + H(+)</text>
        <dbReference type="Rhea" id="RHEA:74271"/>
        <dbReference type="ChEBI" id="CHEBI:15378"/>
        <dbReference type="ChEBI" id="CHEBI:30616"/>
        <dbReference type="ChEBI" id="CHEBI:176428"/>
        <dbReference type="ChEBI" id="CHEBI:193140"/>
        <dbReference type="ChEBI" id="CHEBI:456216"/>
        <dbReference type="EC" id="2.7.1.166"/>
    </reaction>
</comment>
<comment type="pathway">
    <text evidence="1">Bacterial outer membrane biogenesis; LPS core biosynthesis.</text>
</comment>
<comment type="subcellular location">
    <subcellularLocation>
        <location evidence="1">Cell inner membrane</location>
        <topology evidence="1">Peripheral membrane protein</topology>
        <orientation evidence="1">Cytoplasmic side</orientation>
    </subcellularLocation>
</comment>
<comment type="similarity">
    <text evidence="1">Belongs to the protein kinase superfamily. KdkA/RfaP family.</text>
</comment>
<proteinExistence type="inferred from homology"/>